<comment type="function">
    <text evidence="1">One of the primary rRNA binding proteins, it binds directly to 16S rRNA where it nucleates assembly of the head domain of the 30S subunit. Is located at the subunit interface close to the decoding center.</text>
</comment>
<comment type="subunit">
    <text evidence="1">Part of the 30S ribosomal subunit.</text>
</comment>
<comment type="similarity">
    <text evidence="1">Belongs to the universal ribosomal protein uS7 family.</text>
</comment>
<protein>
    <recommendedName>
        <fullName evidence="1">Small ribosomal subunit protein uS7</fullName>
    </recommendedName>
    <alternativeName>
        <fullName evidence="2">30S ribosomal protein S7</fullName>
    </alternativeName>
</protein>
<accession>Q8TRC2</accession>
<reference key="1">
    <citation type="journal article" date="2002" name="Genome Res.">
        <title>The genome of Methanosarcina acetivorans reveals extensive metabolic and physiological diversity.</title>
        <authorList>
            <person name="Galagan J.E."/>
            <person name="Nusbaum C."/>
            <person name="Roy A."/>
            <person name="Endrizzi M.G."/>
            <person name="Macdonald P."/>
            <person name="FitzHugh W."/>
            <person name="Calvo S."/>
            <person name="Engels R."/>
            <person name="Smirnov S."/>
            <person name="Atnoor D."/>
            <person name="Brown A."/>
            <person name="Allen N."/>
            <person name="Naylor J."/>
            <person name="Stange-Thomann N."/>
            <person name="DeArellano K."/>
            <person name="Johnson R."/>
            <person name="Linton L."/>
            <person name="McEwan P."/>
            <person name="McKernan K."/>
            <person name="Talamas J."/>
            <person name="Tirrell A."/>
            <person name="Ye W."/>
            <person name="Zimmer A."/>
            <person name="Barber R.D."/>
            <person name="Cann I."/>
            <person name="Graham D.E."/>
            <person name="Grahame D.A."/>
            <person name="Guss A.M."/>
            <person name="Hedderich R."/>
            <person name="Ingram-Smith C."/>
            <person name="Kuettner H.C."/>
            <person name="Krzycki J.A."/>
            <person name="Leigh J.A."/>
            <person name="Li W."/>
            <person name="Liu J."/>
            <person name="Mukhopadhyay B."/>
            <person name="Reeve J.N."/>
            <person name="Smith K."/>
            <person name="Springer T.A."/>
            <person name="Umayam L.A."/>
            <person name="White O."/>
            <person name="White R.H."/>
            <person name="de Macario E.C."/>
            <person name="Ferry J.G."/>
            <person name="Jarrell K.F."/>
            <person name="Jing H."/>
            <person name="Macario A.J.L."/>
            <person name="Paulsen I.T."/>
            <person name="Pritchett M."/>
            <person name="Sowers K.R."/>
            <person name="Swanson R.V."/>
            <person name="Zinder S.H."/>
            <person name="Lander E."/>
            <person name="Metcalf W.W."/>
            <person name="Birren B."/>
        </authorList>
    </citation>
    <scope>NUCLEOTIDE SEQUENCE [LARGE SCALE GENOMIC DNA]</scope>
    <source>
        <strain>ATCC 35395 / DSM 2834 / JCM 12185 / C2A</strain>
    </source>
</reference>
<proteinExistence type="inferred from homology"/>
<feature type="chain" id="PRO_0000124397" description="Small ribosomal subunit protein uS7">
    <location>
        <begin position="1"/>
        <end position="189"/>
    </location>
</feature>
<dbReference type="EMBL" id="AE010299">
    <property type="protein sequence ID" value="AAM04677.1"/>
    <property type="molecule type" value="Genomic_DNA"/>
</dbReference>
<dbReference type="RefSeq" id="WP_011021279.1">
    <property type="nucleotide sequence ID" value="NC_003552.1"/>
</dbReference>
<dbReference type="SMR" id="Q8TRC2"/>
<dbReference type="FunCoup" id="Q8TRC2">
    <property type="interactions" value="180"/>
</dbReference>
<dbReference type="STRING" id="188937.MA_1258"/>
<dbReference type="EnsemblBacteria" id="AAM04677">
    <property type="protein sequence ID" value="AAM04677"/>
    <property type="gene ID" value="MA_1258"/>
</dbReference>
<dbReference type="GeneID" id="1473146"/>
<dbReference type="KEGG" id="mac:MA_1258"/>
<dbReference type="HOGENOM" id="CLU_063975_0_0_2"/>
<dbReference type="InParanoid" id="Q8TRC2"/>
<dbReference type="OrthoDB" id="45346at2157"/>
<dbReference type="PhylomeDB" id="Q8TRC2"/>
<dbReference type="Proteomes" id="UP000002487">
    <property type="component" value="Chromosome"/>
</dbReference>
<dbReference type="GO" id="GO:0022627">
    <property type="term" value="C:cytosolic small ribosomal subunit"/>
    <property type="evidence" value="ECO:0000318"/>
    <property type="project" value="GO_Central"/>
</dbReference>
<dbReference type="GO" id="GO:0005840">
    <property type="term" value="C:ribosome"/>
    <property type="evidence" value="ECO:0000318"/>
    <property type="project" value="GO_Central"/>
</dbReference>
<dbReference type="GO" id="GO:0003729">
    <property type="term" value="F:mRNA binding"/>
    <property type="evidence" value="ECO:0000318"/>
    <property type="project" value="GO_Central"/>
</dbReference>
<dbReference type="GO" id="GO:0019843">
    <property type="term" value="F:rRNA binding"/>
    <property type="evidence" value="ECO:0000318"/>
    <property type="project" value="GO_Central"/>
</dbReference>
<dbReference type="GO" id="GO:0003735">
    <property type="term" value="F:structural constituent of ribosome"/>
    <property type="evidence" value="ECO:0000318"/>
    <property type="project" value="GO_Central"/>
</dbReference>
<dbReference type="GO" id="GO:0000028">
    <property type="term" value="P:ribosomal small subunit assembly"/>
    <property type="evidence" value="ECO:0000318"/>
    <property type="project" value="GO_Central"/>
</dbReference>
<dbReference type="GO" id="GO:0006412">
    <property type="term" value="P:translation"/>
    <property type="evidence" value="ECO:0000318"/>
    <property type="project" value="GO_Central"/>
</dbReference>
<dbReference type="CDD" id="cd14867">
    <property type="entry name" value="uS7_Eukaryote"/>
    <property type="match status" value="1"/>
</dbReference>
<dbReference type="FunFam" id="1.10.455.10:FF:000016">
    <property type="entry name" value="30S ribosomal protein S7"/>
    <property type="match status" value="1"/>
</dbReference>
<dbReference type="Gene3D" id="1.10.455.10">
    <property type="entry name" value="Ribosomal protein S7 domain"/>
    <property type="match status" value="1"/>
</dbReference>
<dbReference type="HAMAP" id="MF_00480_A">
    <property type="entry name" value="Ribosomal_uS7_A"/>
    <property type="match status" value="1"/>
</dbReference>
<dbReference type="InterPro" id="IPR000235">
    <property type="entry name" value="Ribosomal_uS7"/>
</dbReference>
<dbReference type="InterPro" id="IPR026018">
    <property type="entry name" value="Ribosomal_uS7_arc"/>
</dbReference>
<dbReference type="InterPro" id="IPR023798">
    <property type="entry name" value="Ribosomal_uS7_dom"/>
</dbReference>
<dbReference type="InterPro" id="IPR036823">
    <property type="entry name" value="Ribosomal_uS7_dom_sf"/>
</dbReference>
<dbReference type="InterPro" id="IPR005716">
    <property type="entry name" value="Ribosomal_uS7_euk/arc"/>
</dbReference>
<dbReference type="NCBIfam" id="NF003106">
    <property type="entry name" value="PRK04027.1"/>
    <property type="match status" value="1"/>
</dbReference>
<dbReference type="NCBIfam" id="TIGR01028">
    <property type="entry name" value="uS7_euk_arch"/>
    <property type="match status" value="1"/>
</dbReference>
<dbReference type="PANTHER" id="PTHR11205">
    <property type="entry name" value="RIBOSOMAL PROTEIN S7"/>
    <property type="match status" value="1"/>
</dbReference>
<dbReference type="Pfam" id="PF00177">
    <property type="entry name" value="Ribosomal_S7"/>
    <property type="match status" value="1"/>
</dbReference>
<dbReference type="PIRSF" id="PIRSF002122">
    <property type="entry name" value="RPS7p_RPS7a_RPS5e_RPS7o"/>
    <property type="match status" value="1"/>
</dbReference>
<dbReference type="SUPFAM" id="SSF47973">
    <property type="entry name" value="Ribosomal protein S7"/>
    <property type="match status" value="1"/>
</dbReference>
<sequence length="189" mass="21026">MIFLYKIFGKWDPTEVEVKDLGIKRYVSLTPVIVPHSSGKHARQQFNKSEISIVERLANNLMRTETNTGKKQVTLRAVEEAFDIVNKKTKQNPIQVLVDAIANAGPREEVVRLKYGGISVPKAVDTAPQRRVDTALRYISMGTNAAAFKSKRSVAECLATELIGAANRDTKSFSINRKDAKERVAKAAR</sequence>
<gene>
    <name evidence="1" type="primary">rps7</name>
    <name type="ordered locus">MA_1258</name>
</gene>
<organism>
    <name type="scientific">Methanosarcina acetivorans (strain ATCC 35395 / DSM 2834 / JCM 12185 / C2A)</name>
    <dbReference type="NCBI Taxonomy" id="188937"/>
    <lineage>
        <taxon>Archaea</taxon>
        <taxon>Methanobacteriati</taxon>
        <taxon>Methanobacteriota</taxon>
        <taxon>Stenosarchaea group</taxon>
        <taxon>Methanomicrobia</taxon>
        <taxon>Methanosarcinales</taxon>
        <taxon>Methanosarcinaceae</taxon>
        <taxon>Methanosarcina</taxon>
    </lineage>
</organism>
<keyword id="KW-1185">Reference proteome</keyword>
<keyword id="KW-0687">Ribonucleoprotein</keyword>
<keyword id="KW-0689">Ribosomal protein</keyword>
<keyword id="KW-0694">RNA-binding</keyword>
<keyword id="KW-0699">rRNA-binding</keyword>
<name>RS7_METAC</name>
<evidence type="ECO:0000255" key="1">
    <source>
        <dbReference type="HAMAP-Rule" id="MF_00480"/>
    </source>
</evidence>
<evidence type="ECO:0000305" key="2"/>